<accession>B2FN86</accession>
<keyword id="KW-0963">Cytoplasm</keyword>
<keyword id="KW-0460">Magnesium</keyword>
<keyword id="KW-0479">Metal-binding</keyword>
<keyword id="KW-0548">Nucleotidyltransferase</keyword>
<keyword id="KW-1185">Reference proteome</keyword>
<keyword id="KW-0694">RNA-binding</keyword>
<keyword id="KW-0808">Transferase</keyword>
<organism>
    <name type="scientific">Stenotrophomonas maltophilia (strain K279a)</name>
    <dbReference type="NCBI Taxonomy" id="522373"/>
    <lineage>
        <taxon>Bacteria</taxon>
        <taxon>Pseudomonadati</taxon>
        <taxon>Pseudomonadota</taxon>
        <taxon>Gammaproteobacteria</taxon>
        <taxon>Lysobacterales</taxon>
        <taxon>Lysobacteraceae</taxon>
        <taxon>Stenotrophomonas</taxon>
        <taxon>Stenotrophomonas maltophilia group</taxon>
    </lineage>
</organism>
<proteinExistence type="inferred from homology"/>
<protein>
    <recommendedName>
        <fullName evidence="1">Polyribonucleotide nucleotidyltransferase</fullName>
        <ecNumber evidence="1">2.7.7.8</ecNumber>
    </recommendedName>
    <alternativeName>
        <fullName evidence="1">Polynucleotide phosphorylase</fullName>
        <shortName evidence="1">PNPase</shortName>
    </alternativeName>
</protein>
<sequence length="702" mass="75382">MAKITKTFQYGKHTVTLETGEVARQASGAVIVKMDDTVLLVTAVAAKSAREGQDFFPLTVDYQEKFYAGGRIPGGFFKREGRATEKETLISRLIDRPIRPLFPEDYKNDVQIIATVMSLNPDVDGDIPALIGASAALALAGTPFMGPIGAAKVGYKNGEYILNPTVSELADSQLELVVAGTSNAVLMVESEAALLSEEVMLGAVTFGHREMQKVINAINELTVEAGTKPSTWEAPAKNDALISALKEAIGPRLGEAFQVRDKLQRRDAISAIKKDVFETLAGRVAAEGWNPAELSKEFGELEYRTMRDSVLDTKVRIDGRALDTVRPIAVKTGVLPRTHGSSLFTRGETQAIVTITLGTARDGQVIDAVAGEYKENFLFHYNFPPFSVGECGRMMGPKRREIGHGRLAKRGVLAVMPSLEAFPYTIRVVSEITESNGSSSMASVCGSSLALMDAGVPVKAPVAGIAMGLVKEGERFVVLSDILGDEDHLGDMDFKVAGTAEGISALQMDIKIEGITEEIMKQALQQAKAGRLHILGEMAHGLTAPREELSDYAPRLLTIKIHPDKIREVIGKGGSTIQAITKETGTQIDIQDDGTIVIASVNAIAAQAAKARIEQITSDVEPGRIYEGKVAKIMDFGAFVTILPGKDGLVHVSQISSDRVEKVGDVLKEGDVVKVKVLEVDKQGRIRLSMKAVEEGDAASAE</sequence>
<name>PNP_STRMK</name>
<gene>
    <name evidence="1" type="primary">pnp</name>
    <name type="ordered locus">Smlt3385</name>
</gene>
<evidence type="ECO:0000255" key="1">
    <source>
        <dbReference type="HAMAP-Rule" id="MF_01595"/>
    </source>
</evidence>
<dbReference type="EC" id="2.7.7.8" evidence="1"/>
<dbReference type="EMBL" id="AM743169">
    <property type="protein sequence ID" value="CAQ46813.1"/>
    <property type="molecule type" value="Genomic_DNA"/>
</dbReference>
<dbReference type="RefSeq" id="WP_012480876.1">
    <property type="nucleotide sequence ID" value="NC_010943.1"/>
</dbReference>
<dbReference type="SMR" id="B2FN86"/>
<dbReference type="EnsemblBacteria" id="CAQ46813">
    <property type="protein sequence ID" value="CAQ46813"/>
    <property type="gene ID" value="Smlt3385"/>
</dbReference>
<dbReference type="KEGG" id="sml:Smlt3385"/>
<dbReference type="PATRIC" id="fig|522373.3.peg.3174"/>
<dbReference type="eggNOG" id="COG1185">
    <property type="taxonomic scope" value="Bacteria"/>
</dbReference>
<dbReference type="HOGENOM" id="CLU_004217_2_2_6"/>
<dbReference type="Proteomes" id="UP000008840">
    <property type="component" value="Chromosome"/>
</dbReference>
<dbReference type="GO" id="GO:0005829">
    <property type="term" value="C:cytosol"/>
    <property type="evidence" value="ECO:0007669"/>
    <property type="project" value="TreeGrafter"/>
</dbReference>
<dbReference type="GO" id="GO:0000175">
    <property type="term" value="F:3'-5'-RNA exonuclease activity"/>
    <property type="evidence" value="ECO:0007669"/>
    <property type="project" value="TreeGrafter"/>
</dbReference>
<dbReference type="GO" id="GO:0000287">
    <property type="term" value="F:magnesium ion binding"/>
    <property type="evidence" value="ECO:0007669"/>
    <property type="project" value="UniProtKB-UniRule"/>
</dbReference>
<dbReference type="GO" id="GO:0004654">
    <property type="term" value="F:polyribonucleotide nucleotidyltransferase activity"/>
    <property type="evidence" value="ECO:0007669"/>
    <property type="project" value="UniProtKB-UniRule"/>
</dbReference>
<dbReference type="GO" id="GO:0003723">
    <property type="term" value="F:RNA binding"/>
    <property type="evidence" value="ECO:0007669"/>
    <property type="project" value="UniProtKB-UniRule"/>
</dbReference>
<dbReference type="GO" id="GO:0006402">
    <property type="term" value="P:mRNA catabolic process"/>
    <property type="evidence" value="ECO:0007669"/>
    <property type="project" value="UniProtKB-UniRule"/>
</dbReference>
<dbReference type="GO" id="GO:0006396">
    <property type="term" value="P:RNA processing"/>
    <property type="evidence" value="ECO:0007669"/>
    <property type="project" value="InterPro"/>
</dbReference>
<dbReference type="CDD" id="cd02393">
    <property type="entry name" value="KH-I_PNPase"/>
    <property type="match status" value="1"/>
</dbReference>
<dbReference type="CDD" id="cd11363">
    <property type="entry name" value="RNase_PH_PNPase_1"/>
    <property type="match status" value="1"/>
</dbReference>
<dbReference type="CDD" id="cd11364">
    <property type="entry name" value="RNase_PH_PNPase_2"/>
    <property type="match status" value="1"/>
</dbReference>
<dbReference type="CDD" id="cd04472">
    <property type="entry name" value="S1_PNPase"/>
    <property type="match status" value="1"/>
</dbReference>
<dbReference type="FunFam" id="2.40.50.140:FF:000023">
    <property type="entry name" value="Polyribonucleotide nucleotidyltransferase"/>
    <property type="match status" value="1"/>
</dbReference>
<dbReference type="FunFam" id="3.30.1370.10:FF:000001">
    <property type="entry name" value="Polyribonucleotide nucleotidyltransferase"/>
    <property type="match status" value="1"/>
</dbReference>
<dbReference type="FunFam" id="3.30.230.70:FF:000001">
    <property type="entry name" value="Polyribonucleotide nucleotidyltransferase"/>
    <property type="match status" value="1"/>
</dbReference>
<dbReference type="FunFam" id="3.30.230.70:FF:000002">
    <property type="entry name" value="Polyribonucleotide nucleotidyltransferase"/>
    <property type="match status" value="1"/>
</dbReference>
<dbReference type="Gene3D" id="3.30.230.70">
    <property type="entry name" value="GHMP Kinase, N-terminal domain"/>
    <property type="match status" value="2"/>
</dbReference>
<dbReference type="Gene3D" id="3.30.1370.10">
    <property type="entry name" value="K Homology domain, type 1"/>
    <property type="match status" value="1"/>
</dbReference>
<dbReference type="Gene3D" id="2.40.50.140">
    <property type="entry name" value="Nucleic acid-binding proteins"/>
    <property type="match status" value="1"/>
</dbReference>
<dbReference type="HAMAP" id="MF_01595">
    <property type="entry name" value="PNPase"/>
    <property type="match status" value="1"/>
</dbReference>
<dbReference type="InterPro" id="IPR001247">
    <property type="entry name" value="ExoRNase_PH_dom1"/>
</dbReference>
<dbReference type="InterPro" id="IPR015847">
    <property type="entry name" value="ExoRNase_PH_dom2"/>
</dbReference>
<dbReference type="InterPro" id="IPR036345">
    <property type="entry name" value="ExoRNase_PH_dom2_sf"/>
</dbReference>
<dbReference type="InterPro" id="IPR004087">
    <property type="entry name" value="KH_dom"/>
</dbReference>
<dbReference type="InterPro" id="IPR004088">
    <property type="entry name" value="KH_dom_type_1"/>
</dbReference>
<dbReference type="InterPro" id="IPR036612">
    <property type="entry name" value="KH_dom_type_1_sf"/>
</dbReference>
<dbReference type="InterPro" id="IPR012340">
    <property type="entry name" value="NA-bd_OB-fold"/>
</dbReference>
<dbReference type="InterPro" id="IPR012162">
    <property type="entry name" value="PNPase"/>
</dbReference>
<dbReference type="InterPro" id="IPR027408">
    <property type="entry name" value="PNPase/RNase_PH_dom_sf"/>
</dbReference>
<dbReference type="InterPro" id="IPR015848">
    <property type="entry name" value="PNPase_PH_RNA-bd_bac/org-type"/>
</dbReference>
<dbReference type="InterPro" id="IPR036456">
    <property type="entry name" value="PNPase_PH_RNA-bd_sf"/>
</dbReference>
<dbReference type="InterPro" id="IPR020568">
    <property type="entry name" value="Ribosomal_Su5_D2-typ_SF"/>
</dbReference>
<dbReference type="InterPro" id="IPR003029">
    <property type="entry name" value="S1_domain"/>
</dbReference>
<dbReference type="NCBIfam" id="TIGR03591">
    <property type="entry name" value="polynuc_phos"/>
    <property type="match status" value="1"/>
</dbReference>
<dbReference type="NCBIfam" id="NF008805">
    <property type="entry name" value="PRK11824.1"/>
    <property type="match status" value="1"/>
</dbReference>
<dbReference type="PANTHER" id="PTHR11252">
    <property type="entry name" value="POLYRIBONUCLEOTIDE NUCLEOTIDYLTRANSFERASE"/>
    <property type="match status" value="1"/>
</dbReference>
<dbReference type="PANTHER" id="PTHR11252:SF0">
    <property type="entry name" value="POLYRIBONUCLEOTIDE NUCLEOTIDYLTRANSFERASE 1, MITOCHONDRIAL"/>
    <property type="match status" value="1"/>
</dbReference>
<dbReference type="Pfam" id="PF00013">
    <property type="entry name" value="KH_1"/>
    <property type="match status" value="1"/>
</dbReference>
<dbReference type="Pfam" id="PF03726">
    <property type="entry name" value="PNPase"/>
    <property type="match status" value="1"/>
</dbReference>
<dbReference type="Pfam" id="PF01138">
    <property type="entry name" value="RNase_PH"/>
    <property type="match status" value="2"/>
</dbReference>
<dbReference type="Pfam" id="PF03725">
    <property type="entry name" value="RNase_PH_C"/>
    <property type="match status" value="2"/>
</dbReference>
<dbReference type="Pfam" id="PF00575">
    <property type="entry name" value="S1"/>
    <property type="match status" value="1"/>
</dbReference>
<dbReference type="PIRSF" id="PIRSF005499">
    <property type="entry name" value="PNPase"/>
    <property type="match status" value="1"/>
</dbReference>
<dbReference type="SMART" id="SM00322">
    <property type="entry name" value="KH"/>
    <property type="match status" value="1"/>
</dbReference>
<dbReference type="SMART" id="SM00316">
    <property type="entry name" value="S1"/>
    <property type="match status" value="1"/>
</dbReference>
<dbReference type="SUPFAM" id="SSF54791">
    <property type="entry name" value="Eukaryotic type KH-domain (KH-domain type I)"/>
    <property type="match status" value="1"/>
</dbReference>
<dbReference type="SUPFAM" id="SSF50249">
    <property type="entry name" value="Nucleic acid-binding proteins"/>
    <property type="match status" value="1"/>
</dbReference>
<dbReference type="SUPFAM" id="SSF46915">
    <property type="entry name" value="Polynucleotide phosphorylase/guanosine pentaphosphate synthase (PNPase/GPSI), domain 3"/>
    <property type="match status" value="1"/>
</dbReference>
<dbReference type="SUPFAM" id="SSF55666">
    <property type="entry name" value="Ribonuclease PH domain 2-like"/>
    <property type="match status" value="2"/>
</dbReference>
<dbReference type="SUPFAM" id="SSF54211">
    <property type="entry name" value="Ribosomal protein S5 domain 2-like"/>
    <property type="match status" value="2"/>
</dbReference>
<dbReference type="PROSITE" id="PS50084">
    <property type="entry name" value="KH_TYPE_1"/>
    <property type="match status" value="1"/>
</dbReference>
<dbReference type="PROSITE" id="PS50126">
    <property type="entry name" value="S1"/>
    <property type="match status" value="1"/>
</dbReference>
<reference key="1">
    <citation type="journal article" date="2008" name="Genome Biol.">
        <title>The complete genome, comparative and functional analysis of Stenotrophomonas maltophilia reveals an organism heavily shielded by drug resistance determinants.</title>
        <authorList>
            <person name="Crossman L.C."/>
            <person name="Gould V.C."/>
            <person name="Dow J.M."/>
            <person name="Vernikos G.S."/>
            <person name="Okazaki A."/>
            <person name="Sebaihia M."/>
            <person name="Saunders D."/>
            <person name="Arrowsmith C."/>
            <person name="Carver T."/>
            <person name="Peters N."/>
            <person name="Adlem E."/>
            <person name="Kerhornou A."/>
            <person name="Lord A."/>
            <person name="Murphy L."/>
            <person name="Seeger K."/>
            <person name="Squares R."/>
            <person name="Rutter S."/>
            <person name="Quail M.A."/>
            <person name="Rajandream M.A."/>
            <person name="Harris D."/>
            <person name="Churcher C."/>
            <person name="Bentley S.D."/>
            <person name="Parkhill J."/>
            <person name="Thomson N.R."/>
            <person name="Avison M.B."/>
        </authorList>
    </citation>
    <scope>NUCLEOTIDE SEQUENCE [LARGE SCALE GENOMIC DNA]</scope>
    <source>
        <strain>K279a</strain>
    </source>
</reference>
<comment type="function">
    <text evidence="1">Involved in mRNA degradation. Catalyzes the phosphorolysis of single-stranded polyribonucleotides processively in the 3'- to 5'-direction.</text>
</comment>
<comment type="catalytic activity">
    <reaction evidence="1">
        <text>RNA(n+1) + phosphate = RNA(n) + a ribonucleoside 5'-diphosphate</text>
        <dbReference type="Rhea" id="RHEA:22096"/>
        <dbReference type="Rhea" id="RHEA-COMP:14527"/>
        <dbReference type="Rhea" id="RHEA-COMP:17342"/>
        <dbReference type="ChEBI" id="CHEBI:43474"/>
        <dbReference type="ChEBI" id="CHEBI:57930"/>
        <dbReference type="ChEBI" id="CHEBI:140395"/>
        <dbReference type="EC" id="2.7.7.8"/>
    </reaction>
</comment>
<comment type="cofactor">
    <cofactor evidence="1">
        <name>Mg(2+)</name>
        <dbReference type="ChEBI" id="CHEBI:18420"/>
    </cofactor>
</comment>
<comment type="subunit">
    <text evidence="1">Component of the RNA degradosome, which is a multiprotein complex involved in RNA processing and mRNA degradation.</text>
</comment>
<comment type="subcellular location">
    <subcellularLocation>
        <location evidence="1">Cytoplasm</location>
    </subcellularLocation>
</comment>
<comment type="similarity">
    <text evidence="1">Belongs to the polyribonucleotide nucleotidyltransferase family.</text>
</comment>
<feature type="chain" id="PRO_1000192493" description="Polyribonucleotide nucleotidyltransferase">
    <location>
        <begin position="1"/>
        <end position="702"/>
    </location>
</feature>
<feature type="domain" description="KH" evidence="1">
    <location>
        <begin position="554"/>
        <end position="613"/>
    </location>
</feature>
<feature type="domain" description="S1 motif" evidence="1">
    <location>
        <begin position="623"/>
        <end position="691"/>
    </location>
</feature>
<feature type="binding site" evidence="1">
    <location>
        <position position="487"/>
    </location>
    <ligand>
        <name>Mg(2+)</name>
        <dbReference type="ChEBI" id="CHEBI:18420"/>
    </ligand>
</feature>
<feature type="binding site" evidence="1">
    <location>
        <position position="493"/>
    </location>
    <ligand>
        <name>Mg(2+)</name>
        <dbReference type="ChEBI" id="CHEBI:18420"/>
    </ligand>
</feature>